<keyword id="KW-1185">Reference proteome</keyword>
<organism>
    <name type="scientific">Saccharomyces cerevisiae (strain ATCC 204508 / S288c)</name>
    <name type="common">Baker's yeast</name>
    <dbReference type="NCBI Taxonomy" id="559292"/>
    <lineage>
        <taxon>Eukaryota</taxon>
        <taxon>Fungi</taxon>
        <taxon>Dikarya</taxon>
        <taxon>Ascomycota</taxon>
        <taxon>Saccharomycotina</taxon>
        <taxon>Saccharomycetes</taxon>
        <taxon>Saccharomycetales</taxon>
        <taxon>Saccharomycetaceae</taxon>
        <taxon>Saccharomyces</taxon>
    </lineage>
</organism>
<protein>
    <recommendedName>
        <fullName>Uncharacterized protein YEL008W</fullName>
    </recommendedName>
</protein>
<feature type="chain" id="PRO_0000202616" description="Uncharacterized protein YEL008W">
    <location>
        <begin position="1"/>
        <end position="126"/>
    </location>
</feature>
<accession>P40001</accession>
<accession>A0A1S0T061</accession>
<reference key="1">
    <citation type="journal article" date="1997" name="Nature">
        <title>The nucleotide sequence of Saccharomyces cerevisiae chromosome V.</title>
        <authorList>
            <person name="Dietrich F.S."/>
            <person name="Mulligan J.T."/>
            <person name="Hennessy K.M."/>
            <person name="Yelton M.A."/>
            <person name="Allen E."/>
            <person name="Araujo R."/>
            <person name="Aviles E."/>
            <person name="Berno A."/>
            <person name="Brennan T."/>
            <person name="Carpenter J."/>
            <person name="Chen E."/>
            <person name="Cherry J.M."/>
            <person name="Chung E."/>
            <person name="Duncan M."/>
            <person name="Guzman E."/>
            <person name="Hartzell G."/>
            <person name="Hunicke-Smith S."/>
            <person name="Hyman R.W."/>
            <person name="Kayser A."/>
            <person name="Komp C."/>
            <person name="Lashkari D."/>
            <person name="Lew H."/>
            <person name="Lin D."/>
            <person name="Mosedale D."/>
            <person name="Nakahara K."/>
            <person name="Namath A."/>
            <person name="Norgren R."/>
            <person name="Oefner P."/>
            <person name="Oh C."/>
            <person name="Petel F.X."/>
            <person name="Roberts D."/>
            <person name="Sehl P."/>
            <person name="Schramm S."/>
            <person name="Shogren T."/>
            <person name="Smith V."/>
            <person name="Taylor P."/>
            <person name="Wei Y."/>
            <person name="Botstein D."/>
            <person name="Davis R.W."/>
        </authorList>
    </citation>
    <scope>NUCLEOTIDE SEQUENCE [LARGE SCALE GENOMIC DNA]</scope>
    <source>
        <strain>ATCC 204508 / S288c</strain>
    </source>
</reference>
<reference key="2">
    <citation type="journal article" date="2014" name="G3 (Bethesda)">
        <title>The reference genome sequence of Saccharomyces cerevisiae: Then and now.</title>
        <authorList>
            <person name="Engel S.R."/>
            <person name="Dietrich F.S."/>
            <person name="Fisk D.G."/>
            <person name="Binkley G."/>
            <person name="Balakrishnan R."/>
            <person name="Costanzo M.C."/>
            <person name="Dwight S.S."/>
            <person name="Hitz B.C."/>
            <person name="Karra K."/>
            <person name="Nash R.S."/>
            <person name="Weng S."/>
            <person name="Wong E.D."/>
            <person name="Lloyd P."/>
            <person name="Skrzypek M.S."/>
            <person name="Miyasato S.R."/>
            <person name="Simison M."/>
            <person name="Cherry J.M."/>
        </authorList>
    </citation>
    <scope>GENOME REANNOTATION</scope>
    <source>
        <strain>ATCC 204508 / S288c</strain>
    </source>
</reference>
<reference key="3">
    <citation type="journal article" date="2007" name="Genome Res.">
        <title>Approaching a complete repository of sequence-verified protein-encoding clones for Saccharomyces cerevisiae.</title>
        <authorList>
            <person name="Hu Y."/>
            <person name="Rolfs A."/>
            <person name="Bhullar B."/>
            <person name="Murthy T.V.S."/>
            <person name="Zhu C."/>
            <person name="Berger M.F."/>
            <person name="Camargo A.A."/>
            <person name="Kelley F."/>
            <person name="McCarron S."/>
            <person name="Jepson D."/>
            <person name="Richardson A."/>
            <person name="Raphael J."/>
            <person name="Moreira D."/>
            <person name="Taycher E."/>
            <person name="Zuo D."/>
            <person name="Mohr S."/>
            <person name="Kane M.F."/>
            <person name="Williamson J."/>
            <person name="Simpson A.J.G."/>
            <person name="Bulyk M.L."/>
            <person name="Harlow E."/>
            <person name="Marsischky G."/>
            <person name="Kolodner R.D."/>
            <person name="LaBaer J."/>
        </authorList>
    </citation>
    <scope>NUCLEOTIDE SEQUENCE [GENOMIC DNA]</scope>
    <source>
        <strain>ATCC 204508 / S288c</strain>
    </source>
</reference>
<sequence length="126" mass="14022">MLMHFIPRRSSKAVQFNWLEIGVWRGGVYVKKGIVNARTNNSNFYKMPVVFGIVKGMGALCVHAWGMGYGGIIDCSPVTEHGNISVLQLEYMPWICLSKIMSCSVASRHSNVWIMDETIAPLVGCL</sequence>
<dbReference type="EMBL" id="U18530">
    <property type="protein sequence ID" value="AAB64485.1"/>
    <property type="molecule type" value="Genomic_DNA"/>
</dbReference>
<dbReference type="EMBL" id="AY558376">
    <property type="protein sequence ID" value="AAS56702.1"/>
    <property type="molecule type" value="Genomic_DNA"/>
</dbReference>
<dbReference type="EMBL" id="BK006939">
    <property type="protein sequence ID" value="DAA80287.1"/>
    <property type="molecule type" value="Genomic_DNA"/>
</dbReference>
<dbReference type="PIR" id="S50451">
    <property type="entry name" value="S50451"/>
</dbReference>
<dbReference type="RefSeq" id="NP_001335767.1">
    <property type="nucleotide sequence ID" value="NM_001348823.1"/>
</dbReference>
<dbReference type="DIP" id="DIP-5122N"/>
<dbReference type="FunCoup" id="P40001">
    <property type="interactions" value="48"/>
</dbReference>
<dbReference type="IntAct" id="P40001">
    <property type="interactions" value="2"/>
</dbReference>
<dbReference type="STRING" id="4932.YEL008W"/>
<dbReference type="PaxDb" id="4932-YEL008W"/>
<dbReference type="TopDownProteomics" id="P40001"/>
<dbReference type="EnsemblFungi" id="YEL008W_mRNA">
    <property type="protein sequence ID" value="YEL008W"/>
    <property type="gene ID" value="YEL008W"/>
</dbReference>
<dbReference type="GeneID" id="856710"/>
<dbReference type="AGR" id="SGD:S000000734"/>
<dbReference type="SGD" id="S000000734">
    <property type="gene designation" value="YEL008W"/>
</dbReference>
<dbReference type="HOGENOM" id="CLU_2005685_0_0_1"/>
<dbReference type="InParanoid" id="P40001"/>
<dbReference type="OrthoDB" id="10540782at2759"/>
<dbReference type="PRO" id="PR:P40001"/>
<dbReference type="Proteomes" id="UP000002311">
    <property type="component" value="Chromosome V"/>
</dbReference>
<dbReference type="RNAct" id="P40001">
    <property type="molecule type" value="protein"/>
</dbReference>
<name>YEA8_YEAST</name>
<proteinExistence type="predicted"/>
<gene>
    <name type="ordered locus">YEL008W</name>
</gene>